<keyword id="KW-0106">Calcium</keyword>
<keyword id="KW-0479">Metal-binding</keyword>
<keyword id="KW-1185">Reference proteome</keyword>
<dbReference type="EMBL" id="Z29094">
    <property type="protein sequence ID" value="CAA82343.1"/>
    <property type="molecule type" value="Genomic_DNA"/>
</dbReference>
<dbReference type="PIR" id="S40709">
    <property type="entry name" value="S40709"/>
</dbReference>
<dbReference type="RefSeq" id="NP_499140.1">
    <property type="nucleotide sequence ID" value="NM_066739.1"/>
</dbReference>
<dbReference type="SMR" id="P34316"/>
<dbReference type="FunCoup" id="P34316">
    <property type="interactions" value="2"/>
</dbReference>
<dbReference type="STRING" id="6239.C07A9.5.1"/>
<dbReference type="PaxDb" id="6239-C07A9.5"/>
<dbReference type="EnsemblMetazoa" id="C07A9.5.1">
    <property type="protein sequence ID" value="C07A9.5.1"/>
    <property type="gene ID" value="WBGene00007401"/>
</dbReference>
<dbReference type="GeneID" id="182355"/>
<dbReference type="KEGG" id="cel:CELE_C07A9.5"/>
<dbReference type="UCSC" id="C07A9.5">
    <property type="organism name" value="c. elegans"/>
</dbReference>
<dbReference type="AGR" id="WB:WBGene00007401"/>
<dbReference type="CTD" id="182355"/>
<dbReference type="WormBase" id="C07A9.5">
    <property type="protein sequence ID" value="CE02981"/>
    <property type="gene ID" value="WBGene00007401"/>
</dbReference>
<dbReference type="eggNOG" id="KOG0040">
    <property type="taxonomic scope" value="Eukaryota"/>
</dbReference>
<dbReference type="GeneTree" id="ENSGT00970000196675"/>
<dbReference type="HOGENOM" id="CLU_774404_0_0_1"/>
<dbReference type="InParanoid" id="P34316"/>
<dbReference type="OrthoDB" id="3549872at2759"/>
<dbReference type="PhylomeDB" id="P34316"/>
<dbReference type="PRO" id="PR:P34316"/>
<dbReference type="Proteomes" id="UP000001940">
    <property type="component" value="Chromosome III"/>
</dbReference>
<dbReference type="Bgee" id="WBGene00007401">
    <property type="expression patterns" value="Expressed in embryo and 1 other cell type or tissue"/>
</dbReference>
<dbReference type="GO" id="GO:0005509">
    <property type="term" value="F:calcium ion binding"/>
    <property type="evidence" value="ECO:0007669"/>
    <property type="project" value="InterPro"/>
</dbReference>
<dbReference type="Gene3D" id="1.10.238.10">
    <property type="entry name" value="EF-hand"/>
    <property type="match status" value="1"/>
</dbReference>
<dbReference type="InterPro" id="IPR011992">
    <property type="entry name" value="EF-hand-dom_pair"/>
</dbReference>
<dbReference type="InterPro" id="IPR002048">
    <property type="entry name" value="EF_hand_dom"/>
</dbReference>
<dbReference type="SUPFAM" id="SSF47473">
    <property type="entry name" value="EF-hand"/>
    <property type="match status" value="1"/>
</dbReference>
<dbReference type="PROSITE" id="PS50222">
    <property type="entry name" value="EF_HAND_2"/>
    <property type="match status" value="1"/>
</dbReference>
<proteinExistence type="predicted"/>
<protein>
    <recommendedName>
        <fullName>Uncharacterized calcium-binding protein C07A9.5</fullName>
    </recommendedName>
</protein>
<sequence length="358" mass="41690">MIEKKIIADKFNSNFIWIFVDAADKYPKQMNIKANQEHIIYGEKCRLVGFLETESPSTGRFSTNHSTWTHSRPTVSGERFTHSFKTLASRMERLDQTISDRIRIVDGEISRHSDNEKICEQAACTLKTCDNVIVDVKKELEMLHSLRLEDQKKSLMNLIAKVQKSGMIQDLEKWRSLMESRYIFDNTFSSATPHGVLVEMCQCLELMSSMLRSVEQSIADRNHNGVTEKQLHEFKLAFDYFDQEKNGWLDYEHFELCLKSQGYNFSVESTLKETMSLLDPSTYEKHDYMRYMVKHETTNILDDHSAIEDALKNLDARKISDSMSRKEAEFFMSKIAKKAETSSDQVCLEYKDFVNSFY</sequence>
<evidence type="ECO:0000255" key="1">
    <source>
        <dbReference type="PROSITE-ProRule" id="PRU00448"/>
    </source>
</evidence>
<evidence type="ECO:0000305" key="2"/>
<reference key="1">
    <citation type="journal article" date="1994" name="Nature">
        <title>2.2 Mb of contiguous nucleotide sequence from chromosome III of C. elegans.</title>
        <authorList>
            <person name="Wilson R."/>
            <person name="Ainscough R."/>
            <person name="Anderson K."/>
            <person name="Baynes C."/>
            <person name="Berks M."/>
            <person name="Bonfield J."/>
            <person name="Burton J."/>
            <person name="Connell M."/>
            <person name="Copsey T."/>
            <person name="Cooper J."/>
            <person name="Coulson A."/>
            <person name="Craxton M."/>
            <person name="Dear S."/>
            <person name="Du Z."/>
            <person name="Durbin R."/>
            <person name="Favello A."/>
            <person name="Fraser A."/>
            <person name="Fulton L."/>
            <person name="Gardner A."/>
            <person name="Green P."/>
            <person name="Hawkins T."/>
            <person name="Hillier L."/>
            <person name="Jier M."/>
            <person name="Johnston L."/>
            <person name="Jones M."/>
            <person name="Kershaw J."/>
            <person name="Kirsten J."/>
            <person name="Laisster N."/>
            <person name="Latreille P."/>
            <person name="Lightning J."/>
            <person name="Lloyd C."/>
            <person name="Mortimore B."/>
            <person name="O'Callaghan M."/>
            <person name="Parsons J."/>
            <person name="Percy C."/>
            <person name="Rifken L."/>
            <person name="Roopra A."/>
            <person name="Saunders D."/>
            <person name="Shownkeen R."/>
            <person name="Sims M."/>
            <person name="Smaldon N."/>
            <person name="Smith A."/>
            <person name="Smith M."/>
            <person name="Sonnhammer E."/>
            <person name="Staden R."/>
            <person name="Sulston J."/>
            <person name="Thierry-Mieg J."/>
            <person name="Thomas K."/>
            <person name="Vaudin M."/>
            <person name="Vaughan K."/>
            <person name="Waterston R."/>
            <person name="Watson A."/>
            <person name="Weinstock L."/>
            <person name="Wilkinson-Sproat J."/>
            <person name="Wohldman P."/>
        </authorList>
    </citation>
    <scope>NUCLEOTIDE SEQUENCE [LARGE SCALE GENOMIC DNA]</scope>
    <source>
        <strain>Bristol N2</strain>
    </source>
</reference>
<reference key="2">
    <citation type="journal article" date="1998" name="Science">
        <title>Genome sequence of the nematode C. elegans: a platform for investigating biology.</title>
        <authorList>
            <consortium name="The C. elegans sequencing consortium"/>
        </authorList>
    </citation>
    <scope>NUCLEOTIDE SEQUENCE [LARGE SCALE GENOMIC DNA]</scope>
    <source>
        <strain>Bristol N2</strain>
    </source>
</reference>
<feature type="chain" id="PRO_0000073885" description="Uncharacterized calcium-binding protein C07A9.5">
    <location>
        <begin position="1"/>
        <end position="358"/>
    </location>
</feature>
<feature type="domain" description="EF-hand" evidence="1">
    <location>
        <begin position="229"/>
        <end position="264"/>
    </location>
</feature>
<feature type="binding site" evidence="2">
    <location>
        <position position="242"/>
    </location>
    <ligand>
        <name>Ca(2+)</name>
        <dbReference type="ChEBI" id="CHEBI:29108"/>
    </ligand>
</feature>
<feature type="binding site" evidence="2">
    <location>
        <position position="246"/>
    </location>
    <ligand>
        <name>Ca(2+)</name>
        <dbReference type="ChEBI" id="CHEBI:29108"/>
    </ligand>
</feature>
<feature type="binding site" evidence="2">
    <location>
        <position position="248"/>
    </location>
    <ligand>
        <name>Ca(2+)</name>
        <dbReference type="ChEBI" id="CHEBI:29108"/>
    </ligand>
</feature>
<feature type="binding site" evidence="2">
    <location>
        <position position="253"/>
    </location>
    <ligand>
        <name>Ca(2+)</name>
        <dbReference type="ChEBI" id="CHEBI:29108"/>
    </ligand>
</feature>
<accession>P34316</accession>
<gene>
    <name type="ORF">C07A9.5</name>
</gene>
<name>YKT5_CAEEL</name>
<organism>
    <name type="scientific">Caenorhabditis elegans</name>
    <dbReference type="NCBI Taxonomy" id="6239"/>
    <lineage>
        <taxon>Eukaryota</taxon>
        <taxon>Metazoa</taxon>
        <taxon>Ecdysozoa</taxon>
        <taxon>Nematoda</taxon>
        <taxon>Chromadorea</taxon>
        <taxon>Rhabditida</taxon>
        <taxon>Rhabditina</taxon>
        <taxon>Rhabditomorpha</taxon>
        <taxon>Rhabditoidea</taxon>
        <taxon>Rhabditidae</taxon>
        <taxon>Peloderinae</taxon>
        <taxon>Caenorhabditis</taxon>
    </lineage>
</organism>